<comment type="function">
    <text evidence="3">Inhibits ADP-induced human platelet aggregation.</text>
</comment>
<comment type="subunit">
    <text evidence="1">Monomer (disintegrin).</text>
</comment>
<comment type="subcellular location">
    <subcellularLocation>
        <location>Secreted</location>
    </subcellularLocation>
</comment>
<comment type="tissue specificity">
    <text>Expressed by the venom gland.</text>
</comment>
<comment type="miscellaneous">
    <text>The disintegrin belongs to the short disintegrin subfamily.</text>
</comment>
<comment type="similarity">
    <text evidence="4">Belongs to the venom metalloproteinase (M12B) family. P-II subfamily. P-IIa sub-subfamily.</text>
</comment>
<sequence>DCASGPCCRDCKFLKEGTICKRARGDNMDDYCNGKTCDCPRNPHKGEHDP</sequence>
<accession>P0C6R7</accession>
<keyword id="KW-1217">Cell adhesion impairing toxin</keyword>
<keyword id="KW-0903">Direct protein sequencing</keyword>
<keyword id="KW-1015">Disulfide bond</keyword>
<keyword id="KW-1199">Hemostasis impairing toxin</keyword>
<keyword id="KW-1201">Platelet aggregation inhibiting toxin</keyword>
<keyword id="KW-0964">Secreted</keyword>
<keyword id="KW-0800">Toxin</keyword>
<organism>
    <name type="scientific">Echis pyramidum leakeyi</name>
    <name type="common">Leakey's carpet viper</name>
    <name type="synonym">Echis carinatus leakeyi</name>
    <dbReference type="NCBI Taxonomy" id="38415"/>
    <lineage>
        <taxon>Eukaryota</taxon>
        <taxon>Metazoa</taxon>
        <taxon>Chordata</taxon>
        <taxon>Craniata</taxon>
        <taxon>Vertebrata</taxon>
        <taxon>Euteleostomi</taxon>
        <taxon>Lepidosauria</taxon>
        <taxon>Squamata</taxon>
        <taxon>Bifurcata</taxon>
        <taxon>Unidentata</taxon>
        <taxon>Episquamata</taxon>
        <taxon>Toxicofera</taxon>
        <taxon>Serpentes</taxon>
        <taxon>Colubroidea</taxon>
        <taxon>Viperidae</taxon>
        <taxon>Viperinae</taxon>
        <taxon>Echis</taxon>
    </lineage>
</organism>
<reference key="1">
    <citation type="journal article" date="2001" name="J. Biochem.">
        <title>Comparative biochemistry of disintegrins isolated from snake venom: consideration of the taxonomy and geographical distribution of snakes in the genus Echis.</title>
        <authorList>
            <person name="Okuda D."/>
            <person name="Nozaki C."/>
            <person name="Sekiya F."/>
            <person name="Morita T."/>
        </authorList>
    </citation>
    <scope>PROTEIN SEQUENCE</scope>
    <scope>FUNCTION</scope>
    <source>
        <tissue>Venom</tissue>
    </source>
</reference>
<protein>
    <recommendedName>
        <fullName>Disintegrin pyramidin-A</fullName>
    </recommendedName>
</protein>
<proteinExistence type="evidence at protein level"/>
<evidence type="ECO:0000250" key="1"/>
<evidence type="ECO:0000255" key="2">
    <source>
        <dbReference type="PROSITE-ProRule" id="PRU00068"/>
    </source>
</evidence>
<evidence type="ECO:0000269" key="3">
    <source>
    </source>
</evidence>
<evidence type="ECO:0000305" key="4"/>
<name>VM2PA_ECHPL</name>
<dbReference type="SMR" id="P0C6R7"/>
<dbReference type="GO" id="GO:0005576">
    <property type="term" value="C:extracellular region"/>
    <property type="evidence" value="ECO:0007669"/>
    <property type="project" value="UniProtKB-SubCell"/>
</dbReference>
<dbReference type="GO" id="GO:0090729">
    <property type="term" value="F:toxin activity"/>
    <property type="evidence" value="ECO:0007669"/>
    <property type="project" value="UniProtKB-KW"/>
</dbReference>
<dbReference type="Gene3D" id="4.10.70.10">
    <property type="entry name" value="Disintegrin domain"/>
    <property type="match status" value="1"/>
</dbReference>
<dbReference type="InterPro" id="IPR018358">
    <property type="entry name" value="Disintegrin_CS"/>
</dbReference>
<dbReference type="InterPro" id="IPR001762">
    <property type="entry name" value="Disintegrin_dom"/>
</dbReference>
<dbReference type="InterPro" id="IPR036436">
    <property type="entry name" value="Disintegrin_dom_sf"/>
</dbReference>
<dbReference type="PRINTS" id="PR00289">
    <property type="entry name" value="DISINTEGRIN"/>
</dbReference>
<dbReference type="SMART" id="SM00050">
    <property type="entry name" value="DISIN"/>
    <property type="match status" value="1"/>
</dbReference>
<dbReference type="SUPFAM" id="SSF57552">
    <property type="entry name" value="Blood coagulation inhibitor (disintegrin)"/>
    <property type="match status" value="1"/>
</dbReference>
<dbReference type="PROSITE" id="PS00427">
    <property type="entry name" value="DISINTEGRIN_1"/>
    <property type="match status" value="1"/>
</dbReference>
<dbReference type="PROSITE" id="PS50214">
    <property type="entry name" value="DISINTEGRIN_2"/>
    <property type="match status" value="1"/>
</dbReference>
<feature type="chain" id="PRO_0000326267" description="Disintegrin pyramidin-A">
    <location>
        <begin position="1"/>
        <end position="50"/>
    </location>
</feature>
<feature type="domain" description="Disintegrin" evidence="2">
    <location>
        <begin position="1"/>
        <end position="47"/>
    </location>
</feature>
<feature type="short sequence motif" description="Cell attachment site">
    <location>
        <begin position="24"/>
        <end position="26"/>
    </location>
</feature>
<feature type="disulfide bond" evidence="2">
    <location>
        <begin position="2"/>
        <end position="11"/>
    </location>
</feature>
<feature type="disulfide bond" evidence="2">
    <location>
        <begin position="7"/>
        <end position="32"/>
    </location>
</feature>
<feature type="disulfide bond" evidence="2">
    <location>
        <begin position="8"/>
        <end position="37"/>
    </location>
</feature>
<feature type="disulfide bond" evidence="2">
    <location>
        <begin position="20"/>
        <end position="39"/>
    </location>
</feature>